<name>FLGI_IDILO</name>
<organism>
    <name type="scientific">Idiomarina loihiensis (strain ATCC BAA-735 / DSM 15497 / L2-TR)</name>
    <dbReference type="NCBI Taxonomy" id="283942"/>
    <lineage>
        <taxon>Bacteria</taxon>
        <taxon>Pseudomonadati</taxon>
        <taxon>Pseudomonadota</taxon>
        <taxon>Gammaproteobacteria</taxon>
        <taxon>Alteromonadales</taxon>
        <taxon>Idiomarinaceae</taxon>
        <taxon>Idiomarina</taxon>
    </lineage>
</organism>
<proteinExistence type="inferred from homology"/>
<comment type="function">
    <text evidence="1">Assembles around the rod to form the L-ring and probably protects the motor/basal body from shearing forces during rotation.</text>
</comment>
<comment type="subunit">
    <text evidence="1">The basal body constitutes a major portion of the flagellar organelle and consists of four rings (L,P,S, and M) mounted on a central rod.</text>
</comment>
<comment type="subcellular location">
    <subcellularLocation>
        <location evidence="1">Periplasm</location>
    </subcellularLocation>
    <subcellularLocation>
        <location evidence="1">Bacterial flagellum basal body</location>
    </subcellularLocation>
</comment>
<comment type="similarity">
    <text evidence="1">Belongs to the FlgI family.</text>
</comment>
<accession>Q5R0Q0</accession>
<sequence length="366" mass="38261">MRTLKIFALAVSLLSMLAAPVQASRIKDIASVQGVRSNQLIGYGLVVGLPGTGEQTPFTDQTFRTMLGNFGINIPANERPKIDNVAAVAVHAELPAFAKPGQKIDVTVSSVGSADGLTGGTLMQTFLKGANGEVYAVAQGSLIVGGLGAEGNDGSRIVINTPTVGRIPNGGVVEREVRSGFGSSDYLTFNLHQSDFTTAKRMAETINNLVGDGTAQAVDATSVRVRAPRDLSQRVSYMSTLENLEVQQASASAKIIVNARTGTIVVGQNVELRPAAVAHGNMQVTIAENVNVDQPNPFADGETAITPQSIIDVNQEDARMFVFQPGTTLNDLVRAVNQIGAAPGDMIAVLEALKQAGALSGELIVI</sequence>
<evidence type="ECO:0000255" key="1">
    <source>
        <dbReference type="HAMAP-Rule" id="MF_00416"/>
    </source>
</evidence>
<reference key="1">
    <citation type="journal article" date="2004" name="Proc. Natl. Acad. Sci. U.S.A.">
        <title>Genome sequence of the deep-sea gamma-proteobacterium Idiomarina loihiensis reveals amino acid fermentation as a source of carbon and energy.</title>
        <authorList>
            <person name="Hou S."/>
            <person name="Saw J.H."/>
            <person name="Lee K.S."/>
            <person name="Freitas T.A."/>
            <person name="Belisle C."/>
            <person name="Kawarabayasi Y."/>
            <person name="Donachie S.P."/>
            <person name="Pikina A."/>
            <person name="Galperin M.Y."/>
            <person name="Koonin E.V."/>
            <person name="Makarova K.S."/>
            <person name="Omelchenko M.V."/>
            <person name="Sorokin A."/>
            <person name="Wolf Y.I."/>
            <person name="Li Q.X."/>
            <person name="Keum Y.S."/>
            <person name="Campbell S."/>
            <person name="Denery J."/>
            <person name="Aizawa S."/>
            <person name="Shibata S."/>
            <person name="Malahoff A."/>
            <person name="Alam M."/>
        </authorList>
    </citation>
    <scope>NUCLEOTIDE SEQUENCE [LARGE SCALE GENOMIC DNA]</scope>
    <source>
        <strain>ATCC BAA-735 / DSM 15497 / L2-TR</strain>
    </source>
</reference>
<gene>
    <name evidence="1" type="primary">flgI</name>
    <name type="ordered locus">IL1140</name>
</gene>
<dbReference type="EMBL" id="AE017340">
    <property type="protein sequence ID" value="AAV81980.1"/>
    <property type="molecule type" value="Genomic_DNA"/>
</dbReference>
<dbReference type="RefSeq" id="WP_011234391.1">
    <property type="nucleotide sequence ID" value="NC_006512.1"/>
</dbReference>
<dbReference type="SMR" id="Q5R0Q0"/>
<dbReference type="STRING" id="283942.IL1140"/>
<dbReference type="GeneID" id="41336308"/>
<dbReference type="KEGG" id="ilo:IL1140"/>
<dbReference type="eggNOG" id="COG1706">
    <property type="taxonomic scope" value="Bacteria"/>
</dbReference>
<dbReference type="HOGENOM" id="CLU_045235_1_0_6"/>
<dbReference type="OrthoDB" id="9786431at2"/>
<dbReference type="Proteomes" id="UP000001171">
    <property type="component" value="Chromosome"/>
</dbReference>
<dbReference type="GO" id="GO:0009428">
    <property type="term" value="C:bacterial-type flagellum basal body, distal rod, P ring"/>
    <property type="evidence" value="ECO:0007669"/>
    <property type="project" value="InterPro"/>
</dbReference>
<dbReference type="GO" id="GO:0030288">
    <property type="term" value="C:outer membrane-bounded periplasmic space"/>
    <property type="evidence" value="ECO:0007669"/>
    <property type="project" value="InterPro"/>
</dbReference>
<dbReference type="GO" id="GO:0005198">
    <property type="term" value="F:structural molecule activity"/>
    <property type="evidence" value="ECO:0007669"/>
    <property type="project" value="InterPro"/>
</dbReference>
<dbReference type="GO" id="GO:0071973">
    <property type="term" value="P:bacterial-type flagellum-dependent cell motility"/>
    <property type="evidence" value="ECO:0007669"/>
    <property type="project" value="InterPro"/>
</dbReference>
<dbReference type="HAMAP" id="MF_00416">
    <property type="entry name" value="FlgI"/>
    <property type="match status" value="1"/>
</dbReference>
<dbReference type="InterPro" id="IPR001782">
    <property type="entry name" value="Flag_FlgI"/>
</dbReference>
<dbReference type="NCBIfam" id="NF003676">
    <property type="entry name" value="PRK05303.1"/>
    <property type="match status" value="1"/>
</dbReference>
<dbReference type="PANTHER" id="PTHR30381">
    <property type="entry name" value="FLAGELLAR P-RING PERIPLASMIC PROTEIN FLGI"/>
    <property type="match status" value="1"/>
</dbReference>
<dbReference type="PANTHER" id="PTHR30381:SF0">
    <property type="entry name" value="FLAGELLAR P-RING PROTEIN"/>
    <property type="match status" value="1"/>
</dbReference>
<dbReference type="Pfam" id="PF02119">
    <property type="entry name" value="FlgI"/>
    <property type="match status" value="1"/>
</dbReference>
<dbReference type="PRINTS" id="PR01010">
    <property type="entry name" value="FLGPRINGFLGI"/>
</dbReference>
<protein>
    <recommendedName>
        <fullName evidence="1">Flagellar P-ring protein</fullName>
    </recommendedName>
    <alternativeName>
        <fullName evidence="1">Basal body P-ring protein</fullName>
    </alternativeName>
</protein>
<feature type="signal peptide" evidence="1">
    <location>
        <begin position="1"/>
        <end position="23"/>
    </location>
</feature>
<feature type="chain" id="PRO_0000009508" description="Flagellar P-ring protein">
    <location>
        <begin position="24"/>
        <end position="366"/>
    </location>
</feature>
<keyword id="KW-0975">Bacterial flagellum</keyword>
<keyword id="KW-0574">Periplasm</keyword>
<keyword id="KW-1185">Reference proteome</keyword>
<keyword id="KW-0732">Signal</keyword>